<proteinExistence type="evidence at transcript level"/>
<accession>Q94071</accession>
<accession>A0A131MBC5</accession>
<accession>A0A131MBE2</accession>
<accession>A0A131MBV4</accession>
<accession>A0A131MBW2</accession>
<accession>A0A131MBW4</accession>
<accession>A0A131MBY3</accession>
<accession>A0A131MBZ3</accession>
<accession>A0A131MC19</accession>
<accession>A0A131MC32</accession>
<accession>A0A131MCT0</accession>
<accession>A0A131MD42</accession>
<accession>A0A131MD54</accession>
<accession>A0A131MD98</accession>
<accession>A0A131MDA8</accession>
<accession>A0A131MDI4</accession>
<accession>A0A131MDJ4</accession>
<accession>A7LPI2</accession>
<accession>Q94075</accession>
<evidence type="ECO:0000250" key="1">
    <source>
        <dbReference type="UniProtKB" id="Q86W92"/>
    </source>
</evidence>
<evidence type="ECO:0000255" key="2"/>
<evidence type="ECO:0000255" key="3">
    <source>
        <dbReference type="PROSITE-ProRule" id="PRU00184"/>
    </source>
</evidence>
<evidence type="ECO:0000256" key="4">
    <source>
        <dbReference type="SAM" id="MobiDB-lite"/>
    </source>
</evidence>
<evidence type="ECO:0000269" key="5">
    <source>
    </source>
</evidence>
<evidence type="ECO:0000269" key="6">
    <source>
    </source>
</evidence>
<evidence type="ECO:0000305" key="7"/>
<evidence type="ECO:0000312" key="8">
    <source>
        <dbReference type="WormBase" id="T21H8.1a"/>
    </source>
</evidence>
<evidence type="ECO:0000312" key="9">
    <source>
        <dbReference type="WormBase" id="T21H8.1b"/>
    </source>
</evidence>
<evidence type="ECO:0000312" key="10">
    <source>
        <dbReference type="WormBase" id="T21H8.1c"/>
    </source>
</evidence>
<evidence type="ECO:0000312" key="11">
    <source>
        <dbReference type="WormBase" id="T21H8.1d"/>
    </source>
</evidence>
<evidence type="ECO:0000312" key="12">
    <source>
        <dbReference type="WormBase" id="T21H8.1e"/>
    </source>
</evidence>
<evidence type="ECO:0000312" key="13">
    <source>
        <dbReference type="WormBase" id="T21H8.1f"/>
    </source>
</evidence>
<evidence type="ECO:0000312" key="14">
    <source>
        <dbReference type="WormBase" id="T21H8.1g"/>
    </source>
</evidence>
<evidence type="ECO:0000312" key="15">
    <source>
        <dbReference type="WormBase" id="T21H8.1h"/>
    </source>
</evidence>
<evidence type="ECO:0000312" key="16">
    <source>
        <dbReference type="WormBase" id="T21H8.1i"/>
    </source>
</evidence>
<evidence type="ECO:0000312" key="17">
    <source>
        <dbReference type="WormBase" id="T21H8.1j"/>
    </source>
</evidence>
<evidence type="ECO:0000312" key="18">
    <source>
        <dbReference type="WormBase" id="T21H8.1k"/>
    </source>
</evidence>
<evidence type="ECO:0000312" key="19">
    <source>
        <dbReference type="WormBase" id="T21H8.1l"/>
    </source>
</evidence>
<evidence type="ECO:0000312" key="20">
    <source>
        <dbReference type="WormBase" id="T21H8.1m"/>
    </source>
</evidence>
<evidence type="ECO:0000312" key="21">
    <source>
        <dbReference type="WormBase" id="T21H8.1n"/>
    </source>
</evidence>
<evidence type="ECO:0000312" key="22">
    <source>
        <dbReference type="WormBase" id="T21H8.1o"/>
    </source>
</evidence>
<evidence type="ECO:0000312" key="23">
    <source>
        <dbReference type="WormBase" id="T21H8.1p"/>
    </source>
</evidence>
<evidence type="ECO:0000312" key="24">
    <source>
        <dbReference type="WormBase" id="T21H8.1q"/>
    </source>
</evidence>
<evidence type="ECO:0000312" key="25">
    <source>
        <dbReference type="WormBase" id="T21H8.1r"/>
    </source>
</evidence>
<evidence type="ECO:0000312" key="26">
    <source>
        <dbReference type="WormBase" id="T21H8.1s"/>
    </source>
</evidence>
<feature type="chain" id="PRO_0000191039" description="Liprin-beta homolog">
    <location>
        <begin position="1"/>
        <end position="1004"/>
    </location>
</feature>
<feature type="domain" description="SAM 1" evidence="3">
    <location>
        <begin position="698"/>
        <end position="762"/>
    </location>
</feature>
<feature type="domain" description="SAM 2" evidence="3">
    <location>
        <begin position="770"/>
        <end position="833"/>
    </location>
</feature>
<feature type="domain" description="SAM 3" evidence="3">
    <location>
        <begin position="858"/>
        <end position="930"/>
    </location>
</feature>
<feature type="region of interest" description="Disordered" evidence="4">
    <location>
        <begin position="50"/>
        <end position="122"/>
    </location>
</feature>
<feature type="region of interest" description="Disordered" evidence="4">
    <location>
        <begin position="135"/>
        <end position="161"/>
    </location>
</feature>
<feature type="region of interest" description="Disordered" evidence="4">
    <location>
        <begin position="341"/>
        <end position="366"/>
    </location>
</feature>
<feature type="region of interest" description="Disordered" evidence="4">
    <location>
        <begin position="432"/>
        <end position="497"/>
    </location>
</feature>
<feature type="region of interest" description="Disordered" evidence="4">
    <location>
        <begin position="528"/>
        <end position="550"/>
    </location>
</feature>
<feature type="region of interest" description="Disordered" evidence="4">
    <location>
        <begin position="648"/>
        <end position="686"/>
    </location>
</feature>
<feature type="coiled-coil region" evidence="2">
    <location>
        <begin position="280"/>
        <end position="328"/>
    </location>
</feature>
<feature type="coiled-coil region" evidence="2">
    <location>
        <begin position="364"/>
        <end position="396"/>
    </location>
</feature>
<feature type="compositionally biased region" description="Low complexity" evidence="4">
    <location>
        <begin position="50"/>
        <end position="63"/>
    </location>
</feature>
<feature type="compositionally biased region" description="Low complexity" evidence="4">
    <location>
        <begin position="149"/>
        <end position="161"/>
    </location>
</feature>
<feature type="compositionally biased region" description="Polar residues" evidence="4">
    <location>
        <begin position="434"/>
        <end position="453"/>
    </location>
</feature>
<feature type="compositionally biased region" description="Low complexity" evidence="4">
    <location>
        <begin position="458"/>
        <end position="474"/>
    </location>
</feature>
<feature type="compositionally biased region" description="Polar residues" evidence="4">
    <location>
        <begin position="531"/>
        <end position="541"/>
    </location>
</feature>
<feature type="compositionally biased region" description="Polar residues" evidence="4">
    <location>
        <begin position="648"/>
        <end position="684"/>
    </location>
</feature>
<feature type="splice variant" id="VSP_060300" description="In isoform e and isoform f." evidence="7">
    <location>
        <begin position="1"/>
        <end position="321"/>
    </location>
</feature>
<feature type="splice variant" id="VSP_060301" description="In isoform r and isoform s." evidence="7">
    <original>MVYSSSSMSNTNIRRRSVPITIQKSRMDGFAEANQLLSSALEQLDDIIRNGNSTSRSTTTIGSAGPTPIIKKSFRDLLPPPPALRSTFSPRIMENGHSNLAHKQHINDDIDNGNADDERSSREINRQWISTDWKHRTDLGSDGSSGVESPPSDLPTSSSSLFSPPRVYQEFVKAIDEQTMTERPDLETRLKIMQWVAGRT</original>
    <variation>MAQRRAKSK</variation>
    <location>
        <begin position="1"/>
        <end position="200"/>
    </location>
</feature>
<feature type="splice variant" id="VSP_060302" description="In isoform m and isoform n." evidence="7">
    <location>
        <begin position="1"/>
        <end position="179"/>
    </location>
</feature>
<feature type="splice variant" id="VSP_060303" description="In isoform k, isoform l and isoform q." evidence="7">
    <location>
        <begin position="1"/>
        <end position="92"/>
    </location>
</feature>
<feature type="splice variant" id="VSP_060304" description="In isoform a, isoform b, isoform c and isoform d." evidence="7">
    <original>MVYSSSSMSNTNIRRRSVPITIQKSRMDGFAEANQLLSSALEQLDDIIRNGNSTSRSTTTIGSAGPTPIIKKSFRDL</original>
    <variation>MYSRHSISDAYGAVCILPEDTLTVSSSQNSHIDAFAALVDRERDSSRSSGSGNIFKDNGSIKRRQALPYVTHYSDSGFGSAPSAGSSCSY</variation>
    <location>
        <begin position="1"/>
        <end position="77"/>
    </location>
</feature>
<feature type="splice variant" id="VSP_060305" description="In isoform i, isoform j and isoform p." evidence="7">
    <location>
        <begin position="1"/>
        <end position="26"/>
    </location>
</feature>
<feature type="splice variant" id="VSP_060306" description="In isoform a, isoform b, isoform c and isoform d." evidence="7">
    <original>ALRSTFSPRIMENGHSNLAHKQHINDDIDNGNADDERSSREINRQWISTDWKHRTDLGSDGSSGVESPPSDLPTSSSSLFSPPRVYQEFVKAIDEQTMTERPDLETRLKIMQWVAGRT</original>
    <variation>PYRMRGSGGLSSKPQHKIHRSLSDSKYTASLMTTGVPTLPLLSMTPFNQLQSRDARGASWISL</variation>
    <location>
        <begin position="83"/>
        <end position="200"/>
    </location>
</feature>
<feature type="splice variant" id="VSP_060307" description="In isoform o, isoform p and isoform q." evidence="7">
    <original>SP</original>
    <variation>VS</variation>
    <location>
        <begin position="201"/>
        <end position="202"/>
    </location>
</feature>
<feature type="splice variant" id="VSP_060308" description="In isoform o, isoform p and isoform q." evidence="7">
    <location>
        <begin position="203"/>
        <end position="1004"/>
    </location>
</feature>
<feature type="splice variant" id="VSP_060309" description="In isoform c and isoform d." evidence="7">
    <location>
        <begin position="273"/>
        <end position="319"/>
    </location>
</feature>
<feature type="splice variant" id="VSP_060310" description="In isoform a, isoform c, isoform e, isoform g, isoform i, isoform k, isoform m and isoform r." evidence="7">
    <location>
        <begin position="569"/>
        <end position="610"/>
    </location>
</feature>
<sequence length="1004" mass="112712">MVYSSSSMSNTNIRRRSVPITIQKSRMDGFAEANQLLSSALEQLDDIIRNGNSTSRSTTTIGSAGPTPIIKKSFRDLLPPPPALRSTFSPRIMENGHSNLAHKQHINDDIDNGNADDERSSREINRQWISTDWKHRTDLGSDGSSGVESPPSDLPTSSSSLFSPPRVYQEFVKAIDEQTMTERPDLETRLKIMQWVAGRTSPSPSMSTVSCPEYPELQDKLHRLAMARDSLQLQVSVLSEQVGAQKEKIKDLETVIALKRNNLTSTEELLQDKYHRIDECQELESKKMDLLAEVSSLKLRYATLEREKNETEKKLRLSQNEMDHVNQSMHGMVVQQQLAHHTNGHSSGGYMSPLREHRSEKNDDEMSQLRTAVQRLMADNEHKSLQINTLRNALDEQMRSRSQQEDFYASQRNYTDNFDVNAQIRRILMDEPSDSMSHSTSFPVSLSSTTSNGKGPRSTVQSSSSYNSSLSAVSPQHNWSSAGAGTPRQLHPIGGNQRVNNITSAQYCSPSPPAARQLAAELDELRRNGNEGANHNYSSASLPRGVGKASSTLTLPSKKLSVASGTSVGELGGSMSSVAQPTPKRNYRAQMNRWINEKLRRKRAVSAPNLVESDDEIARGRNLNNATSQSNLKNFSRERTRSSLRNIFSKLTRSTSQDQSNSFRRGSAARSTSTARLGSTNHLGTVSKRPPLSQFVDWRSEQLADWIAEIGYPQYMNEVSRHVRSGRHFLNMSMNEYEGVLNIKNPVHRKRVAILLRRIEEDIMEPANKWDVHQTLRWLDDIGLPQYKDVFAENVVDGPLLLSLTANDAVEMKVVNAHHYATLARSIQFLKKADFRFNAMEKLIDQNIVEKYPCPDVVVRWTHSATCEWLRKIDLAEFTQNLLFAGVPGALMIYEPSFTAESLAEILQMPPHKTLLRRHLTSHFNQLLGPKIIADKRDFLAAGNYPQISPTGRVKVVKKGFSLTRKKAKNEICLEPEELLCPQVLVHKYPTGAGDNSSFESSNV</sequence>
<gene>
    <name evidence="15" type="primary">hlb-1</name>
    <name evidence="15" type="ORF">T21H8.1</name>
</gene>
<organism>
    <name type="scientific">Caenorhabditis elegans</name>
    <dbReference type="NCBI Taxonomy" id="6239"/>
    <lineage>
        <taxon>Eukaryota</taxon>
        <taxon>Metazoa</taxon>
        <taxon>Ecdysozoa</taxon>
        <taxon>Nematoda</taxon>
        <taxon>Chromadorea</taxon>
        <taxon>Rhabditida</taxon>
        <taxon>Rhabditina</taxon>
        <taxon>Rhabditomorpha</taxon>
        <taxon>Rhabditoidea</taxon>
        <taxon>Rhabditidae</taxon>
        <taxon>Peloderinae</taxon>
        <taxon>Caenorhabditis</taxon>
    </lineage>
</organism>
<keyword id="KW-0025">Alternative splicing</keyword>
<keyword id="KW-0175">Coiled coil</keyword>
<keyword id="KW-1185">Reference proteome</keyword>
<keyword id="KW-0677">Repeat</keyword>
<dbReference type="EMBL" id="BX284606">
    <property type="protein sequence ID" value="CAB01770.1"/>
    <property type="molecule type" value="Genomic_DNA"/>
</dbReference>
<dbReference type="EMBL" id="BX284606">
    <property type="protein sequence ID" value="CAB01771.3"/>
    <property type="molecule type" value="Genomic_DNA"/>
</dbReference>
<dbReference type="EMBL" id="BX284606">
    <property type="protein sequence ID" value="CAO79773.1"/>
    <property type="molecule type" value="Genomic_DNA"/>
</dbReference>
<dbReference type="EMBL" id="BX284606">
    <property type="protein sequence ID" value="CZR14633.1"/>
    <property type="molecule type" value="Genomic_DNA"/>
</dbReference>
<dbReference type="EMBL" id="BX284606">
    <property type="protein sequence ID" value="CZR14634.1"/>
    <property type="molecule type" value="Genomic_DNA"/>
</dbReference>
<dbReference type="EMBL" id="BX284606">
    <property type="protein sequence ID" value="CZR14635.1"/>
    <property type="molecule type" value="Genomic_DNA"/>
</dbReference>
<dbReference type="EMBL" id="BX284606">
    <property type="protein sequence ID" value="CZR14636.1"/>
    <property type="molecule type" value="Genomic_DNA"/>
</dbReference>
<dbReference type="EMBL" id="BX284606">
    <property type="protein sequence ID" value="CZR14637.1"/>
    <property type="molecule type" value="Genomic_DNA"/>
</dbReference>
<dbReference type="EMBL" id="BX284606">
    <property type="protein sequence ID" value="CZR14638.1"/>
    <property type="molecule type" value="Genomic_DNA"/>
</dbReference>
<dbReference type="EMBL" id="BX284606">
    <property type="protein sequence ID" value="CZR14639.1"/>
    <property type="molecule type" value="Genomic_DNA"/>
</dbReference>
<dbReference type="EMBL" id="BX284606">
    <property type="protein sequence ID" value="CZR14640.1"/>
    <property type="molecule type" value="Genomic_DNA"/>
</dbReference>
<dbReference type="EMBL" id="BX284606">
    <property type="protein sequence ID" value="CZR14641.1"/>
    <property type="molecule type" value="Genomic_DNA"/>
</dbReference>
<dbReference type="EMBL" id="BX284606">
    <property type="protein sequence ID" value="CZR14642.1"/>
    <property type="molecule type" value="Genomic_DNA"/>
</dbReference>
<dbReference type="EMBL" id="BX284606">
    <property type="protein sequence ID" value="CZR14643.1"/>
    <property type="molecule type" value="Genomic_DNA"/>
</dbReference>
<dbReference type="EMBL" id="BX284606">
    <property type="protein sequence ID" value="CZR14644.1"/>
    <property type="molecule type" value="Genomic_DNA"/>
</dbReference>
<dbReference type="EMBL" id="BX284606">
    <property type="protein sequence ID" value="CZR14645.1"/>
    <property type="molecule type" value="Genomic_DNA"/>
</dbReference>
<dbReference type="EMBL" id="BX284606">
    <property type="protein sequence ID" value="CZR14646.1"/>
    <property type="molecule type" value="Genomic_DNA"/>
</dbReference>
<dbReference type="EMBL" id="BX284606">
    <property type="protein sequence ID" value="CZR14647.1"/>
    <property type="molecule type" value="Genomic_DNA"/>
</dbReference>
<dbReference type="EMBL" id="BX284606">
    <property type="protein sequence ID" value="CZR14648.1"/>
    <property type="molecule type" value="Genomic_DNA"/>
</dbReference>
<dbReference type="PIR" id="A89696">
    <property type="entry name" value="A89696"/>
</dbReference>
<dbReference type="PIR" id="T25087">
    <property type="entry name" value="T25087"/>
</dbReference>
<dbReference type="PIR" id="T25088">
    <property type="entry name" value="T25088"/>
</dbReference>
<dbReference type="RefSeq" id="NP_001123185.1">
    <molecule id="Q94071-3"/>
    <property type="nucleotide sequence ID" value="NM_001129713.4"/>
</dbReference>
<dbReference type="RefSeq" id="NP_001309703.1">
    <molecule id="Q94071-4"/>
    <property type="nucleotide sequence ID" value="NM_001322655.3"/>
</dbReference>
<dbReference type="RefSeq" id="NP_001309704.1">
    <molecule id="Q94071-5"/>
    <property type="nucleotide sequence ID" value="NM_001322656.4"/>
</dbReference>
<dbReference type="RefSeq" id="NP_001309705.1">
    <molecule id="Q94071-6"/>
    <property type="nucleotide sequence ID" value="NM_001322659.3"/>
</dbReference>
<dbReference type="RefSeq" id="NP_001309706.1">
    <molecule id="Q94071-7"/>
    <property type="nucleotide sequence ID" value="NM_001322660.3"/>
</dbReference>
<dbReference type="RefSeq" id="NP_001309707.1">
    <molecule id="Q94071-8"/>
    <property type="nucleotide sequence ID" value="NM_001322647.4"/>
</dbReference>
<dbReference type="RefSeq" id="NP_001309708.1">
    <molecule id="Q94071-1"/>
    <property type="nucleotide sequence ID" value="NM_001322648.4"/>
</dbReference>
<dbReference type="RefSeq" id="NP_001309709.1">
    <molecule id="Q94071-9"/>
    <property type="nucleotide sequence ID" value="NM_001322649.4"/>
</dbReference>
<dbReference type="RefSeq" id="NP_001309710.1">
    <molecule id="Q94071-10"/>
    <property type="nucleotide sequence ID" value="NM_001322650.3"/>
</dbReference>
<dbReference type="RefSeq" id="NP_001309711.1">
    <property type="nucleotide sequence ID" value="NM_001322651.1"/>
</dbReference>
<dbReference type="RefSeq" id="NP_001309712.1">
    <property type="nucleotide sequence ID" value="NM_001322652.1"/>
</dbReference>
<dbReference type="RefSeq" id="NP_001309713.1">
    <molecule id="Q94071-13"/>
    <property type="nucleotide sequence ID" value="NM_001322653.5"/>
</dbReference>
<dbReference type="RefSeq" id="NP_001309714.1">
    <molecule id="Q94071-14"/>
    <property type="nucleotide sequence ID" value="NM_001322654.3"/>
</dbReference>
<dbReference type="RefSeq" id="NP_001309715.1">
    <property type="nucleotide sequence ID" value="NM_001322661.1"/>
</dbReference>
<dbReference type="RefSeq" id="NP_001309716.1">
    <molecule id="Q94071-17"/>
    <property type="nucleotide sequence ID" value="NM_001322662.1"/>
</dbReference>
<dbReference type="RefSeq" id="NP_001309717.1">
    <molecule id="Q94071-18"/>
    <property type="nucleotide sequence ID" value="NM_001322657.3"/>
</dbReference>
<dbReference type="RefSeq" id="NP_001309718.1">
    <molecule id="Q94071-19"/>
    <property type="nucleotide sequence ID" value="NM_001322658.3"/>
</dbReference>
<dbReference type="RefSeq" id="NP_001364846.1">
    <molecule id="Q94071-12"/>
    <property type="nucleotide sequence ID" value="NM_001377622.2"/>
</dbReference>
<dbReference type="RefSeq" id="NP_001379172.1">
    <molecule id="Q94071-16"/>
    <property type="nucleotide sequence ID" value="NM_001392880.1"/>
</dbReference>
<dbReference type="RefSeq" id="NP_001380196.1">
    <molecule id="Q94071-11"/>
    <property type="nucleotide sequence ID" value="NM_001392878.1"/>
</dbReference>
<dbReference type="RefSeq" id="NP_001380197.1">
    <molecule id="Q94071-15"/>
    <property type="nucleotide sequence ID" value="NM_001392879.1"/>
</dbReference>
<dbReference type="RefSeq" id="NP_510311.2">
    <molecule id="Q94071-2"/>
    <property type="nucleotide sequence ID" value="NM_077910.5"/>
</dbReference>
<dbReference type="RefSeq" id="NP_510312.1">
    <property type="nucleotide sequence ID" value="NM_077911.1"/>
</dbReference>
<dbReference type="SMR" id="Q94071"/>
<dbReference type="BioGRID" id="46399">
    <property type="interactions" value="2"/>
</dbReference>
<dbReference type="FunCoup" id="Q94071">
    <property type="interactions" value="1425"/>
</dbReference>
<dbReference type="IntAct" id="Q94071">
    <property type="interactions" value="2"/>
</dbReference>
<dbReference type="STRING" id="6239.T21H8.1h.1"/>
<dbReference type="PaxDb" id="6239-T21H8.1b.1"/>
<dbReference type="PeptideAtlas" id="Q94071"/>
<dbReference type="EnsemblMetazoa" id="T21H8.1a.1">
    <molecule id="Q94071-2"/>
    <property type="protein sequence ID" value="T21H8.1a.1"/>
    <property type="gene ID" value="WBGene00011904"/>
</dbReference>
<dbReference type="EnsemblMetazoa" id="T21H8.1b.1">
    <molecule id="Q94071-3"/>
    <property type="protein sequence ID" value="T21H8.1b.1"/>
    <property type="gene ID" value="WBGene00011904"/>
</dbReference>
<dbReference type="EnsemblMetazoa" id="T21H8.1c.1">
    <molecule id="Q94071-4"/>
    <property type="protein sequence ID" value="T21H8.1c.1"/>
    <property type="gene ID" value="WBGene00011904"/>
</dbReference>
<dbReference type="EnsemblMetazoa" id="T21H8.1d.1">
    <molecule id="Q94071-5"/>
    <property type="protein sequence ID" value="T21H8.1d.1"/>
    <property type="gene ID" value="WBGene00011904"/>
</dbReference>
<dbReference type="EnsemblMetazoa" id="T21H8.1e.1">
    <molecule id="Q94071-6"/>
    <property type="protein sequence ID" value="T21H8.1e.1"/>
    <property type="gene ID" value="WBGene00011904"/>
</dbReference>
<dbReference type="EnsemblMetazoa" id="T21H8.1f.1">
    <molecule id="Q94071-7"/>
    <property type="protein sequence ID" value="T21H8.1f.1"/>
    <property type="gene ID" value="WBGene00011904"/>
</dbReference>
<dbReference type="EnsemblMetazoa" id="T21H8.1g.1">
    <molecule id="Q94071-8"/>
    <property type="protein sequence ID" value="T21H8.1g.1"/>
    <property type="gene ID" value="WBGene00011904"/>
</dbReference>
<dbReference type="EnsemblMetazoa" id="T21H8.1h.1">
    <molecule id="Q94071-1"/>
    <property type="protein sequence ID" value="T21H8.1h.1"/>
    <property type="gene ID" value="WBGene00011904"/>
</dbReference>
<dbReference type="EnsemblMetazoa" id="T21H8.1i.1">
    <molecule id="Q94071-9"/>
    <property type="protein sequence ID" value="T21H8.1i.1"/>
    <property type="gene ID" value="WBGene00011904"/>
</dbReference>
<dbReference type="EnsemblMetazoa" id="T21H8.1j.1">
    <molecule id="Q94071-10"/>
    <property type="protein sequence ID" value="T21H8.1j.1"/>
    <property type="gene ID" value="WBGene00011904"/>
</dbReference>
<dbReference type="EnsemblMetazoa" id="T21H8.1k.1">
    <molecule id="Q94071-11"/>
    <property type="protein sequence ID" value="T21H8.1k.1"/>
    <property type="gene ID" value="WBGene00011904"/>
</dbReference>
<dbReference type="EnsemblMetazoa" id="T21H8.1k.2">
    <molecule id="Q94071-11"/>
    <property type="protein sequence ID" value="T21H8.1k.2"/>
    <property type="gene ID" value="WBGene00011904"/>
</dbReference>
<dbReference type="EnsemblMetazoa" id="T21H8.1l.1">
    <molecule id="Q94071-12"/>
    <property type="protein sequence ID" value="T21H8.1l.1"/>
    <property type="gene ID" value="WBGene00011904"/>
</dbReference>
<dbReference type="EnsemblMetazoa" id="T21H8.1m.1">
    <molecule id="Q94071-13"/>
    <property type="protein sequence ID" value="T21H8.1m.1"/>
    <property type="gene ID" value="WBGene00011904"/>
</dbReference>
<dbReference type="EnsemblMetazoa" id="T21H8.1n.1">
    <molecule id="Q94071-14"/>
    <property type="protein sequence ID" value="T21H8.1n.1"/>
    <property type="gene ID" value="WBGene00011904"/>
</dbReference>
<dbReference type="EnsemblMetazoa" id="T21H8.1o.1">
    <molecule id="Q94071-15"/>
    <property type="protein sequence ID" value="T21H8.1o.1"/>
    <property type="gene ID" value="WBGene00011904"/>
</dbReference>
<dbReference type="EnsemblMetazoa" id="T21H8.1p.1">
    <molecule id="Q94071-16"/>
    <property type="protein sequence ID" value="T21H8.1p.1"/>
    <property type="gene ID" value="WBGene00011904"/>
</dbReference>
<dbReference type="EnsemblMetazoa" id="T21H8.1q.1">
    <molecule id="Q94071-17"/>
    <property type="protein sequence ID" value="T21H8.1q.1"/>
    <property type="gene ID" value="WBGene00011904"/>
</dbReference>
<dbReference type="EnsemblMetazoa" id="T21H8.1r.1">
    <molecule id="Q94071-18"/>
    <property type="protein sequence ID" value="T21H8.1r.1"/>
    <property type="gene ID" value="WBGene00011904"/>
</dbReference>
<dbReference type="EnsemblMetazoa" id="T21H8.1s.1">
    <molecule id="Q94071-19"/>
    <property type="protein sequence ID" value="T21H8.1s.1"/>
    <property type="gene ID" value="WBGene00011904"/>
</dbReference>
<dbReference type="GeneID" id="181499"/>
<dbReference type="KEGG" id="cel:CELE_T21H8.1"/>
<dbReference type="UCSC" id="T21H8.1b.1">
    <property type="organism name" value="c. elegans"/>
</dbReference>
<dbReference type="UCSC" id="T21H8.5">
    <property type="organism name" value="c. elegans"/>
</dbReference>
<dbReference type="AGR" id="WB:WBGene00011904"/>
<dbReference type="CTD" id="181499"/>
<dbReference type="WormBase" id="T21H8.1a">
    <molecule id="Q94071-2"/>
    <property type="protein sequence ID" value="CE37412"/>
    <property type="gene ID" value="WBGene00011904"/>
    <property type="gene designation" value="hlb-1"/>
</dbReference>
<dbReference type="WormBase" id="T21H8.1b">
    <molecule id="Q94071-3"/>
    <property type="protein sequence ID" value="CE41339"/>
    <property type="gene ID" value="WBGene00011904"/>
    <property type="gene designation" value="hlb-1"/>
</dbReference>
<dbReference type="WormBase" id="T21H8.1c">
    <molecule id="Q94071-4"/>
    <property type="protein sequence ID" value="CE51474"/>
    <property type="gene ID" value="WBGene00011904"/>
    <property type="gene designation" value="hlb-1"/>
</dbReference>
<dbReference type="WormBase" id="T21H8.1d">
    <molecule id="Q94071-5"/>
    <property type="protein sequence ID" value="CE51489"/>
    <property type="gene ID" value="WBGene00011904"/>
    <property type="gene designation" value="hlb-1"/>
</dbReference>
<dbReference type="WormBase" id="T21H8.1e">
    <molecule id="Q94071-6"/>
    <property type="protein sequence ID" value="CE51430"/>
    <property type="gene ID" value="WBGene00011904"/>
    <property type="gene designation" value="hlb-1"/>
</dbReference>
<dbReference type="WormBase" id="T21H8.1f">
    <molecule id="Q94071-7"/>
    <property type="protein sequence ID" value="CE51357"/>
    <property type="gene ID" value="WBGene00011904"/>
    <property type="gene designation" value="hlb-1"/>
</dbReference>
<dbReference type="WormBase" id="T21H8.1g">
    <molecule id="Q94071-8"/>
    <property type="protein sequence ID" value="CE51523"/>
    <property type="gene ID" value="WBGene00011904"/>
    <property type="gene designation" value="hlb-1"/>
</dbReference>
<dbReference type="WormBase" id="T21H8.1h">
    <molecule id="Q94071-1"/>
    <property type="protein sequence ID" value="CE51532"/>
    <property type="gene ID" value="WBGene00011904"/>
    <property type="gene designation" value="hlb-1"/>
</dbReference>
<dbReference type="WormBase" id="T21H8.1i">
    <molecule id="Q94071-9"/>
    <property type="protein sequence ID" value="CE51461"/>
    <property type="gene ID" value="WBGene00011904"/>
    <property type="gene designation" value="hlb-1"/>
</dbReference>
<dbReference type="WormBase" id="T21H8.1j">
    <molecule id="Q94071-10"/>
    <property type="protein sequence ID" value="CE51332"/>
    <property type="gene ID" value="WBGene00011904"/>
    <property type="gene designation" value="hlb-1"/>
</dbReference>
<dbReference type="WormBase" id="T21H8.1k">
    <molecule id="Q94071-11"/>
    <property type="protein sequence ID" value="CE51249"/>
    <property type="gene ID" value="WBGene00011904"/>
    <property type="gene designation" value="hlb-1"/>
</dbReference>
<dbReference type="WormBase" id="T21H8.1l">
    <molecule id="Q94071-12"/>
    <property type="protein sequence ID" value="CE51262"/>
    <property type="gene ID" value="WBGene00011904"/>
    <property type="gene designation" value="hlb-1"/>
</dbReference>
<dbReference type="WormBase" id="T21H8.1m">
    <molecule id="Q94071-13"/>
    <property type="protein sequence ID" value="CE51507"/>
    <property type="gene ID" value="WBGene00011904"/>
    <property type="gene designation" value="hlb-1"/>
</dbReference>
<dbReference type="WormBase" id="T21H8.1n">
    <molecule id="Q94071-14"/>
    <property type="protein sequence ID" value="CE51376"/>
    <property type="gene ID" value="WBGene00011904"/>
    <property type="gene designation" value="hlb-1"/>
</dbReference>
<dbReference type="WormBase" id="T21H8.1o">
    <molecule id="Q94071-15"/>
    <property type="protein sequence ID" value="CE51301"/>
    <property type="gene ID" value="WBGene00011904"/>
    <property type="gene designation" value="hlb-1"/>
</dbReference>
<dbReference type="WormBase" id="T21H8.1p">
    <molecule id="Q94071-16"/>
    <property type="protein sequence ID" value="CE18956"/>
    <property type="gene ID" value="WBGene00011904"/>
    <property type="gene designation" value="hlb-1"/>
</dbReference>
<dbReference type="WormBase" id="T21H8.1q">
    <molecule id="Q94071-17"/>
    <property type="protein sequence ID" value="CE51549"/>
    <property type="gene ID" value="WBGene00011904"/>
    <property type="gene designation" value="hlb-1"/>
</dbReference>
<dbReference type="WormBase" id="T21H8.1r">
    <molecule id="Q94071-18"/>
    <property type="protein sequence ID" value="CE51423"/>
    <property type="gene ID" value="WBGene00011904"/>
    <property type="gene designation" value="hlb-1"/>
</dbReference>
<dbReference type="WormBase" id="T21H8.1s">
    <molecule id="Q94071-19"/>
    <property type="protein sequence ID" value="CE51350"/>
    <property type="gene ID" value="WBGene00011904"/>
    <property type="gene designation" value="hlb-1"/>
</dbReference>
<dbReference type="eggNOG" id="ENOG502TGDQ">
    <property type="taxonomic scope" value="Eukaryota"/>
</dbReference>
<dbReference type="eggNOG" id="KOG1899">
    <property type="taxonomic scope" value="Eukaryota"/>
</dbReference>
<dbReference type="GeneTree" id="ENSGT01050000244951"/>
<dbReference type="HOGENOM" id="CLU_1526552_0_0_1"/>
<dbReference type="InParanoid" id="Q94071"/>
<dbReference type="OMA" id="WSNSGTP"/>
<dbReference type="OrthoDB" id="6516566at2759"/>
<dbReference type="Reactome" id="R-CEL-388844">
    <property type="pathway name" value="Receptor-type tyrosine-protein phosphatases"/>
</dbReference>
<dbReference type="PRO" id="PR:Q94071"/>
<dbReference type="Proteomes" id="UP000001940">
    <property type="component" value="Chromosome X"/>
</dbReference>
<dbReference type="Bgee" id="WBGene00011904">
    <property type="expression patterns" value="Expressed in pharyngeal muscle cell (C elegans) and 3 other cell types or tissues"/>
</dbReference>
<dbReference type="GO" id="GO:0048786">
    <property type="term" value="C:presynaptic active zone"/>
    <property type="evidence" value="ECO:0000318"/>
    <property type="project" value="GO_Central"/>
</dbReference>
<dbReference type="GO" id="GO:0007528">
    <property type="term" value="P:neuromuscular junction development"/>
    <property type="evidence" value="ECO:0000315"/>
    <property type="project" value="WormBase"/>
</dbReference>
<dbReference type="GO" id="GO:0040017">
    <property type="term" value="P:positive regulation of locomotion"/>
    <property type="evidence" value="ECO:0000315"/>
    <property type="project" value="WormBase"/>
</dbReference>
<dbReference type="GO" id="GO:0043051">
    <property type="term" value="P:regulation of nematode pharyngeal pumping"/>
    <property type="evidence" value="ECO:0000315"/>
    <property type="project" value="WormBase"/>
</dbReference>
<dbReference type="GO" id="GO:0022414">
    <property type="term" value="P:reproductive process"/>
    <property type="evidence" value="ECO:0000315"/>
    <property type="project" value="WormBase"/>
</dbReference>
<dbReference type="CDD" id="cd09563">
    <property type="entry name" value="SAM_liprin-beta1_2_repeat1"/>
    <property type="match status" value="1"/>
</dbReference>
<dbReference type="CDD" id="cd09566">
    <property type="entry name" value="SAM_liprin-beta1_2_repeat2"/>
    <property type="match status" value="1"/>
</dbReference>
<dbReference type="CDD" id="cd09569">
    <property type="entry name" value="SAM_liprin-beta1_2_repeat3"/>
    <property type="match status" value="1"/>
</dbReference>
<dbReference type="FunFam" id="1.10.150.50:FF:000092">
    <property type="entry name" value="Liprin-beta"/>
    <property type="match status" value="1"/>
</dbReference>
<dbReference type="Gene3D" id="1.10.150.50">
    <property type="entry name" value="Transcription Factor, Ets-1"/>
    <property type="match status" value="3"/>
</dbReference>
<dbReference type="InterPro" id="IPR029515">
    <property type="entry name" value="Liprin"/>
</dbReference>
<dbReference type="InterPro" id="IPR037617">
    <property type="entry name" value="Liprin-beta_SAM_rpt_1"/>
</dbReference>
<dbReference type="InterPro" id="IPR037618">
    <property type="entry name" value="Liprin-beta_SAM_rpt_2"/>
</dbReference>
<dbReference type="InterPro" id="IPR037619">
    <property type="entry name" value="Liprin-beta_SAM_rpt_3"/>
</dbReference>
<dbReference type="InterPro" id="IPR001660">
    <property type="entry name" value="SAM"/>
</dbReference>
<dbReference type="InterPro" id="IPR013761">
    <property type="entry name" value="SAM/pointed_sf"/>
</dbReference>
<dbReference type="PANTHER" id="PTHR12587:SF14">
    <property type="entry name" value="AT31531P"/>
    <property type="match status" value="1"/>
</dbReference>
<dbReference type="PANTHER" id="PTHR12587">
    <property type="entry name" value="LAR INTERACTING PROTEIN LIP -RELATED PROTEIN"/>
    <property type="match status" value="1"/>
</dbReference>
<dbReference type="Pfam" id="PF00536">
    <property type="entry name" value="SAM_1"/>
    <property type="match status" value="2"/>
</dbReference>
<dbReference type="Pfam" id="PF07647">
    <property type="entry name" value="SAM_2"/>
    <property type="match status" value="1"/>
</dbReference>
<dbReference type="SMART" id="SM00454">
    <property type="entry name" value="SAM"/>
    <property type="match status" value="3"/>
</dbReference>
<dbReference type="SUPFAM" id="SSF47769">
    <property type="entry name" value="SAM/Pointed domain"/>
    <property type="match status" value="2"/>
</dbReference>
<dbReference type="PROSITE" id="PS50105">
    <property type="entry name" value="SAM_DOMAIN"/>
    <property type="match status" value="2"/>
</dbReference>
<name>LIPB_CAEEL</name>
<comment type="function">
    <text evidence="1 5">Involved in the regulation of synaptic function at neuromuscular junctions (PubMed:19290026). Together with the liprin-alpha protein syd-2, may play a role in regulating the structure of the neuronal region, called the active zone, from which synaptic vesicles send neurotransmitter signals across the synapse (PubMed:19290026). Does not seem to be required for neuronal development (PubMed:19290026). May regulate the disassembly of focal adhesions (By similarity). Does not bind receptor-like tyrosine phosphatases type 2A (By similarity).</text>
</comment>
<comment type="alternative products">
    <event type="alternative splicing"/>
    <isoform>
        <id>Q94071-1</id>
        <name evidence="15">h</name>
        <sequence type="displayed"/>
    </isoform>
    <isoform>
        <id>Q94071-2</id>
        <name evidence="8">a</name>
        <sequence type="described" ref="VSP_060304 VSP_060306 VSP_060310"/>
    </isoform>
    <isoform>
        <id>Q94071-3</id>
        <name evidence="9">b</name>
        <sequence type="described" ref="VSP_060304 VSP_060306"/>
    </isoform>
    <isoform>
        <id>Q94071-4</id>
        <name evidence="10">c</name>
        <sequence type="described" ref="VSP_060304 VSP_060306 VSP_060309 VSP_060310"/>
    </isoform>
    <isoform>
        <id>Q94071-5</id>
        <name evidence="11">d</name>
        <sequence type="described" ref="VSP_060304 VSP_060306 VSP_060309"/>
    </isoform>
    <isoform>
        <id>Q94071-6</id>
        <name evidence="12">e</name>
        <sequence type="described" ref="VSP_060300 VSP_060310"/>
    </isoform>
    <isoform>
        <id>Q94071-7</id>
        <name evidence="13">f</name>
        <sequence type="described" ref="VSP_060300"/>
    </isoform>
    <isoform>
        <id>Q94071-8</id>
        <name evidence="14">g</name>
        <sequence type="described" ref="VSP_060310"/>
    </isoform>
    <isoform>
        <id>Q94071-9</id>
        <name evidence="16">i</name>
        <sequence type="described" ref="VSP_060305 VSP_060310"/>
    </isoform>
    <isoform>
        <id>Q94071-10</id>
        <name evidence="17">j</name>
        <sequence type="described" ref="VSP_060305"/>
    </isoform>
    <isoform>
        <id>Q94071-11</id>
        <name evidence="18">k</name>
        <sequence type="described" ref="VSP_060303 VSP_060310"/>
    </isoform>
    <isoform>
        <id>Q94071-12</id>
        <name evidence="19">l</name>
        <sequence type="described" ref="VSP_060303"/>
    </isoform>
    <isoform>
        <id>Q94071-13</id>
        <name evidence="20">m</name>
        <sequence type="described" ref="VSP_060302 VSP_060310"/>
    </isoform>
    <isoform>
        <id>Q94071-14</id>
        <name evidence="21">n</name>
        <sequence type="described" ref="VSP_060302"/>
    </isoform>
    <isoform>
        <id>Q94071-15</id>
        <name evidence="22">o</name>
        <sequence type="described" ref="VSP_060307 VSP_060308"/>
    </isoform>
    <isoform>
        <id>Q94071-16</id>
        <name evidence="23">p</name>
        <sequence type="described" ref="VSP_060305 VSP_060307 VSP_060308"/>
    </isoform>
    <isoform>
        <id>Q94071-17</id>
        <name evidence="24">q</name>
        <sequence type="described" ref="VSP_060303 VSP_060307 VSP_060308"/>
    </isoform>
    <isoform>
        <id>Q94071-18</id>
        <name evidence="25">r</name>
        <sequence type="described" ref="VSP_060301 VSP_060310"/>
    </isoform>
    <isoform>
        <id>Q94071-19</id>
        <name evidence="26">s</name>
        <sequence type="described" ref="VSP_060301"/>
    </isoform>
</comment>
<comment type="tissue specificity">
    <text evidence="6">Expressed in pharyngeal muscle, particularly posterior bulb, adjacent to the dorsal and ventral cord (but not in ventral cord neurons), and in body wall muscles.</text>
</comment>
<comment type="disruption phenotype">
    <text evidence="5">Defective locomotion, reduced pumping rate and reduced brood size (PubMed:19290026). Defects in presynaptic and postsynaptic structures and functions in muscle cells (PubMed:19290026). Resistant to the acetylcholinesterase inhibitor aldicarb and to levamisole, an agonist for postsynaptic acetylcholine receptors in muscles (PubMed:19290026). Double knockout with the syd-2 mutant ju37 increases resistance to aldicarb and levamisole (PubMed:19290026).</text>
</comment>
<comment type="similarity">
    <text evidence="7">Belongs to the liprin family. Liprin-beta subfamily.</text>
</comment>
<protein>
    <recommendedName>
        <fullName evidence="15">Liprin-beta homolog</fullName>
    </recommendedName>
    <alternativeName>
        <fullName>LAR-interacting protein beta</fullName>
    </alternativeName>
</protein>
<reference key="1">
    <citation type="journal article" date="1998" name="Science">
        <title>Genome sequence of the nematode C. elegans: a platform for investigating biology.</title>
        <authorList>
            <consortium name="The C. elegans sequencing consortium"/>
        </authorList>
    </citation>
    <scope>NUCLEOTIDE SEQUENCE [LARGE SCALE GENOMIC DNA]</scope>
    <source>
        <strain>Bristol N2</strain>
    </source>
</reference>
<reference key="2">
    <citation type="journal article" date="1998" name="J. Biol. Chem.">
        <title>Liprins, a family of LAR transmembrane protein-tyrosine phosphatase-interacting proteins.</title>
        <authorList>
            <person name="Serra-Pages C."/>
            <person name="Medley Q.G."/>
            <person name="Tang M."/>
            <person name="Hart A."/>
            <person name="Streuli M."/>
        </authorList>
    </citation>
    <scope>TISSUE SPECIFICITY</scope>
</reference>
<reference key="3">
    <citation type="journal article" date="2009" name="Neurosci. Bull.">
        <title>HLB-1 functions as a new regulator for the organization and function of neuromuscular junctions in nematode Caenorhabditis elegans.</title>
        <authorList>
            <person name="Wang D.Y."/>
            <person name="Wang Y."/>
        </authorList>
    </citation>
    <scope>FUNCTION</scope>
    <scope>DISRUPTION PHENOTYPE</scope>
</reference>